<organism>
    <name type="scientific">Pectobacterium carotovorum subsp. carotovorum</name>
    <name type="common">Erwinia carotovora subsp. carotovora</name>
    <dbReference type="NCBI Taxonomy" id="555"/>
    <lineage>
        <taxon>Bacteria</taxon>
        <taxon>Pseudomonadati</taxon>
        <taxon>Pseudomonadota</taxon>
        <taxon>Gammaproteobacteria</taxon>
        <taxon>Enterobacterales</taxon>
        <taxon>Pectobacteriaceae</taxon>
        <taxon>Pectobacterium</taxon>
    </lineage>
</organism>
<evidence type="ECO:0000255" key="1"/>
<evidence type="ECO:0000255" key="2">
    <source>
        <dbReference type="PROSITE-ProRule" id="PRU00691"/>
    </source>
</evidence>
<evidence type="ECO:0000305" key="3"/>
<reference key="1">
    <citation type="journal article" date="1999" name="Microbiology">
        <title>Erwinia carotovora DsbA mutants: evidence for a periplasmic-stress signal transduction system affecting transcription of genes encoding secreted proteins.</title>
        <authorList>
            <person name="Vincent-Sealy L.V."/>
            <person name="Thomas J.D."/>
            <person name="Commander P."/>
            <person name="Salmond G.P.C."/>
        </authorList>
    </citation>
    <scope>NUCLEOTIDE SEQUENCE [GENOMIC DNA]</scope>
    <source>
        <strain>SCRI 193</strain>
    </source>
</reference>
<sequence length="207" mass="23078">MKKLWFALIGVVLAFSASAAEFSDGKQYVELDKPATQEPQVLEFFSFYCPHCYQFEQVYHVPDAVKKALPEGTKMTRYHVDFLGPLGKNLTQAWAVAMALGVEDKITPLMFDAVQKTQTVQKPEDIREVFVKAGVSAEEFDGALNSFVVKSLVAQQEKAAADLQLRGVPAMFVNGKYMIKNDGLDTSSMDGYVKQYADVVKFLITKK</sequence>
<comment type="function">
    <text>Required for disulfide bond formation in some periplasmic proteins such as PhoA or OmpA. Acts by transferring its disulfide bond to other proteins and is reduced in the process. DsbA is reoxidized by DsbB. It is required for pilus biogenesis.</text>
</comment>
<comment type="subcellular location">
    <subcellularLocation>
        <location>Periplasm</location>
    </subcellularLocation>
</comment>
<comment type="similarity">
    <text evidence="3">Belongs to the thioredoxin family. DsbA subfamily.</text>
</comment>
<proteinExistence type="inferred from homology"/>
<accession>Q9RB10</accession>
<feature type="signal peptide" evidence="1">
    <location>
        <begin position="1"/>
        <end position="19"/>
    </location>
</feature>
<feature type="chain" id="PRO_0000034258" description="Thiol:disulfide interchange protein DsbA">
    <location>
        <begin position="20"/>
        <end position="207"/>
    </location>
</feature>
<feature type="domain" description="Thioredoxin" evidence="2">
    <location>
        <begin position="20"/>
        <end position="149"/>
    </location>
</feature>
<feature type="disulfide bond" description="Redox-active" evidence="2">
    <location>
        <begin position="49"/>
        <end position="52"/>
    </location>
</feature>
<protein>
    <recommendedName>
        <fullName>Thiol:disulfide interchange protein DsbA</fullName>
    </recommendedName>
</protein>
<keyword id="KW-1015">Disulfide bond</keyword>
<keyword id="KW-0574">Periplasm</keyword>
<keyword id="KW-0676">Redox-active center</keyword>
<keyword id="KW-0732">Signal</keyword>
<name>DSBA_PECCC</name>
<dbReference type="EMBL" id="AF146615">
    <property type="protein sequence ID" value="AAD47613.1"/>
    <property type="molecule type" value="Genomic_DNA"/>
</dbReference>
<dbReference type="RefSeq" id="WP_010298113.1">
    <property type="nucleotide sequence ID" value="NZ_BRCO01000005.1"/>
</dbReference>
<dbReference type="SMR" id="Q9RB10"/>
<dbReference type="GeneID" id="61350201"/>
<dbReference type="PATRIC" id="fig|555.16.peg.4018"/>
<dbReference type="GO" id="GO:0042597">
    <property type="term" value="C:periplasmic space"/>
    <property type="evidence" value="ECO:0007669"/>
    <property type="project" value="UniProtKB-SubCell"/>
</dbReference>
<dbReference type="GO" id="GO:0015036">
    <property type="term" value="F:disulfide oxidoreductase activity"/>
    <property type="evidence" value="ECO:0007669"/>
    <property type="project" value="UniProtKB-ARBA"/>
</dbReference>
<dbReference type="CDD" id="cd03019">
    <property type="entry name" value="DsbA_DsbA"/>
    <property type="match status" value="1"/>
</dbReference>
<dbReference type="Gene3D" id="3.40.30.10">
    <property type="entry name" value="Glutaredoxin"/>
    <property type="match status" value="1"/>
</dbReference>
<dbReference type="InterPro" id="IPR001853">
    <property type="entry name" value="DSBA-like_thioredoxin_dom"/>
</dbReference>
<dbReference type="InterPro" id="IPR023205">
    <property type="entry name" value="DsbA/DsbL"/>
</dbReference>
<dbReference type="InterPro" id="IPR050824">
    <property type="entry name" value="Thiol_disulfide_DsbA"/>
</dbReference>
<dbReference type="InterPro" id="IPR036249">
    <property type="entry name" value="Thioredoxin-like_sf"/>
</dbReference>
<dbReference type="InterPro" id="IPR017937">
    <property type="entry name" value="Thioredoxin_CS"/>
</dbReference>
<dbReference type="InterPro" id="IPR013766">
    <property type="entry name" value="Thioredoxin_domain"/>
</dbReference>
<dbReference type="NCBIfam" id="NF008198">
    <property type="entry name" value="PRK10954.1"/>
    <property type="match status" value="1"/>
</dbReference>
<dbReference type="PANTHER" id="PTHR35891">
    <property type="entry name" value="THIOL:DISULFIDE INTERCHANGE PROTEIN DSBA"/>
    <property type="match status" value="1"/>
</dbReference>
<dbReference type="PANTHER" id="PTHR35891:SF2">
    <property type="entry name" value="THIOL:DISULFIDE INTERCHANGE PROTEIN DSBA"/>
    <property type="match status" value="1"/>
</dbReference>
<dbReference type="Pfam" id="PF01323">
    <property type="entry name" value="DSBA"/>
    <property type="match status" value="1"/>
</dbReference>
<dbReference type="PIRSF" id="PIRSF001488">
    <property type="entry name" value="Tdi_protein"/>
    <property type="match status" value="1"/>
</dbReference>
<dbReference type="SUPFAM" id="SSF52833">
    <property type="entry name" value="Thioredoxin-like"/>
    <property type="match status" value="1"/>
</dbReference>
<dbReference type="PROSITE" id="PS00194">
    <property type="entry name" value="THIOREDOXIN_1"/>
    <property type="match status" value="1"/>
</dbReference>
<dbReference type="PROSITE" id="PS51352">
    <property type="entry name" value="THIOREDOXIN_2"/>
    <property type="match status" value="1"/>
</dbReference>
<gene>
    <name type="primary">dsbA</name>
</gene>